<sequence length="288" mass="31789">MRFSYAEAMTDFTFYIPLAKAAEAAGYSSMTIPDSIAYPFESDSKYPYTPDGNREFMDGKPFIETFVLTAALGAVTTRLRFNFFVLKLPIRPPALVAKQAGSLAALIGNRVGLGVGTSPWPEDYELMGVPFAKRGKRIDECIEIVRGLTTGDYFEFHGEFYDIPKTKMTPAPTQPIPILVGGHADAALRRAARADGWMHGGGDPDELDRLIARVKRLREEAGKTSPFEIHVISLDGFTVDGVKRLEDKGVTDVIVGFRVPYTMGPDTEPLQTKIRNLEMFAENVIAKV</sequence>
<organism>
    <name type="scientific">Mycobacterium tuberculosis (strain CDC 1551 / Oshkosh)</name>
    <dbReference type="NCBI Taxonomy" id="83331"/>
    <lineage>
        <taxon>Bacteria</taxon>
        <taxon>Bacillati</taxon>
        <taxon>Actinomycetota</taxon>
        <taxon>Actinomycetes</taxon>
        <taxon>Mycobacteriales</taxon>
        <taxon>Mycobacteriaceae</taxon>
        <taxon>Mycobacterium</taxon>
        <taxon>Mycobacterium tuberculosis complex</taxon>
    </lineage>
</organism>
<proteinExistence type="predicted"/>
<gene>
    <name type="ordered locus">MT0967</name>
</gene>
<keyword id="KW-1185">Reference proteome</keyword>
<feature type="chain" id="PRO_0000427620" description="Uncharacterized protein MT0967">
    <location>
        <begin position="1"/>
        <end position="288"/>
    </location>
</feature>
<reference key="1">
    <citation type="journal article" date="2002" name="J. Bacteriol.">
        <title>Whole-genome comparison of Mycobacterium tuberculosis clinical and laboratory strains.</title>
        <authorList>
            <person name="Fleischmann R.D."/>
            <person name="Alland D."/>
            <person name="Eisen J.A."/>
            <person name="Carpenter L."/>
            <person name="White O."/>
            <person name="Peterson J.D."/>
            <person name="DeBoy R.T."/>
            <person name="Dodson R.J."/>
            <person name="Gwinn M.L."/>
            <person name="Haft D.H."/>
            <person name="Hickey E.K."/>
            <person name="Kolonay J.F."/>
            <person name="Nelson W.C."/>
            <person name="Umayam L.A."/>
            <person name="Ermolaeva M.D."/>
            <person name="Salzberg S.L."/>
            <person name="Delcher A."/>
            <person name="Utterback T.R."/>
            <person name="Weidman J.F."/>
            <person name="Khouri H.M."/>
            <person name="Gill J."/>
            <person name="Mikula A."/>
            <person name="Bishai W."/>
            <person name="Jacobs W.R. Jr."/>
            <person name="Venter J.C."/>
            <person name="Fraser C.M."/>
        </authorList>
    </citation>
    <scope>NUCLEOTIDE SEQUENCE [LARGE SCALE GENOMIC DNA]</scope>
    <source>
        <strain>CDC 1551 / Oshkosh</strain>
    </source>
</reference>
<accession>P9WKP0</accession>
<accession>L0T7Z0</accession>
<accession>P64761</accession>
<accession>P71569</accession>
<dbReference type="EMBL" id="AE000516">
    <property type="protein sequence ID" value="AAK45214.1"/>
    <property type="molecule type" value="Genomic_DNA"/>
</dbReference>
<dbReference type="PIR" id="B70715">
    <property type="entry name" value="B70715"/>
</dbReference>
<dbReference type="RefSeq" id="WP_003404819.1">
    <property type="nucleotide sequence ID" value="NZ_KK341227.1"/>
</dbReference>
<dbReference type="SMR" id="P9WKP0"/>
<dbReference type="KEGG" id="mtc:MT0967"/>
<dbReference type="PATRIC" id="fig|83331.31.peg.1037"/>
<dbReference type="HOGENOM" id="CLU_027853_7_0_11"/>
<dbReference type="Proteomes" id="UP000001020">
    <property type="component" value="Chromosome"/>
</dbReference>
<dbReference type="GO" id="GO:0016705">
    <property type="term" value="F:oxidoreductase activity, acting on paired donors, with incorporation or reduction of molecular oxygen"/>
    <property type="evidence" value="ECO:0007669"/>
    <property type="project" value="InterPro"/>
</dbReference>
<dbReference type="FunFam" id="3.20.20.30:FF:000014">
    <property type="entry name" value="LLM class F420-dependent oxidoreductase"/>
    <property type="match status" value="1"/>
</dbReference>
<dbReference type="Gene3D" id="3.20.20.30">
    <property type="entry name" value="Luciferase-like domain"/>
    <property type="match status" value="1"/>
</dbReference>
<dbReference type="InterPro" id="IPR051260">
    <property type="entry name" value="Diverse_substr_monoxygenases"/>
</dbReference>
<dbReference type="InterPro" id="IPR019921">
    <property type="entry name" value="Lucif-like_OxRdtase_Rv2161c"/>
</dbReference>
<dbReference type="InterPro" id="IPR011251">
    <property type="entry name" value="Luciferase-like_dom"/>
</dbReference>
<dbReference type="InterPro" id="IPR036661">
    <property type="entry name" value="Luciferase-like_sf"/>
</dbReference>
<dbReference type="NCBIfam" id="TIGR03619">
    <property type="entry name" value="F420_Rv2161c"/>
    <property type="match status" value="1"/>
</dbReference>
<dbReference type="PANTHER" id="PTHR30011">
    <property type="entry name" value="ALKANESULFONATE MONOOXYGENASE-RELATED"/>
    <property type="match status" value="1"/>
</dbReference>
<dbReference type="PANTHER" id="PTHR30011:SF32">
    <property type="entry name" value="CONSERVED PROTEIN"/>
    <property type="match status" value="1"/>
</dbReference>
<dbReference type="Pfam" id="PF00296">
    <property type="entry name" value="Bac_luciferase"/>
    <property type="match status" value="1"/>
</dbReference>
<dbReference type="SUPFAM" id="SSF51679">
    <property type="entry name" value="Bacterial luciferase-like"/>
    <property type="match status" value="1"/>
</dbReference>
<name>Y940_MYCTO</name>
<protein>
    <recommendedName>
        <fullName>Uncharacterized protein MT0967</fullName>
    </recommendedName>
</protein>